<evidence type="ECO:0000250" key="1">
    <source>
        <dbReference type="UniProtKB" id="Q47319"/>
    </source>
</evidence>
<evidence type="ECO:0000256" key="2">
    <source>
        <dbReference type="SAM" id="MobiDB-lite"/>
    </source>
</evidence>
<evidence type="ECO:0000269" key="3">
    <source>
    </source>
</evidence>
<evidence type="ECO:0000303" key="4">
    <source>
    </source>
</evidence>
<evidence type="ECO:0000305" key="5"/>
<evidence type="ECO:0000312" key="6">
    <source>
        <dbReference type="Araport" id="AT2G41750"/>
    </source>
</evidence>
<evidence type="ECO:0000312" key="7">
    <source>
        <dbReference type="EMBL" id="AAC02772.1"/>
    </source>
</evidence>
<dbReference type="EC" id="2.5.1.25" evidence="3"/>
<dbReference type="EMBL" id="AC002339">
    <property type="protein sequence ID" value="AAC02772.1"/>
    <property type="status" value="ALT_SEQ"/>
    <property type="molecule type" value="Genomic_DNA"/>
</dbReference>
<dbReference type="EMBL" id="CP002685">
    <property type="protein sequence ID" value="AEC10028.2"/>
    <property type="molecule type" value="Genomic_DNA"/>
</dbReference>
<dbReference type="EMBL" id="AY074624">
    <property type="protein sequence ID" value="AAL69440.1"/>
    <property type="status" value="ALT_INIT"/>
    <property type="molecule type" value="mRNA"/>
</dbReference>
<dbReference type="EMBL" id="AK118056">
    <property type="protein sequence ID" value="BAC42687.1"/>
    <property type="status" value="ALT_INIT"/>
    <property type="molecule type" value="mRNA"/>
</dbReference>
<dbReference type="EMBL" id="BT020401">
    <property type="protein sequence ID" value="AAV97792.1"/>
    <property type="molecule type" value="mRNA"/>
</dbReference>
<dbReference type="PIR" id="F84845">
    <property type="entry name" value="F84845"/>
</dbReference>
<dbReference type="RefSeq" id="NP_181706.2">
    <property type="nucleotide sequence ID" value="NM_129739.4"/>
</dbReference>
<dbReference type="FunCoup" id="F4IL05">
    <property type="interactions" value="1867"/>
</dbReference>
<dbReference type="STRING" id="3702.F4IL05"/>
<dbReference type="PaxDb" id="3702-AT2G41750.1"/>
<dbReference type="ProteomicsDB" id="207878"/>
<dbReference type="EnsemblPlants" id="AT2G41750.1">
    <property type="protein sequence ID" value="AT2G41750.1"/>
    <property type="gene ID" value="AT2G41750"/>
</dbReference>
<dbReference type="GeneID" id="818774"/>
<dbReference type="Gramene" id="AT2G41750.1">
    <property type="protein sequence ID" value="AT2G41750.1"/>
    <property type="gene ID" value="AT2G41750"/>
</dbReference>
<dbReference type="KEGG" id="ath:AT2G41750"/>
<dbReference type="Araport" id="AT2G41750"/>
<dbReference type="TAIR" id="AT2G41750"/>
<dbReference type="eggNOG" id="KOG4382">
    <property type="taxonomic scope" value="Eukaryota"/>
</dbReference>
<dbReference type="HOGENOM" id="CLU_066458_0_0_1"/>
<dbReference type="InParanoid" id="F4IL05"/>
<dbReference type="OMA" id="YLKPMKP"/>
<dbReference type="PRO" id="PR:F4IL05"/>
<dbReference type="Proteomes" id="UP000006548">
    <property type="component" value="Chromosome 2"/>
</dbReference>
<dbReference type="ExpressionAtlas" id="F4IL05">
    <property type="expression patterns" value="baseline"/>
</dbReference>
<dbReference type="GO" id="GO:0046872">
    <property type="term" value="F:metal ion binding"/>
    <property type="evidence" value="ECO:0007669"/>
    <property type="project" value="UniProtKB-KW"/>
</dbReference>
<dbReference type="GO" id="GO:0016432">
    <property type="term" value="F:tRNA-uridine aminocarboxypropyltransferase activity"/>
    <property type="evidence" value="ECO:0007669"/>
    <property type="project" value="UniProtKB-EC"/>
</dbReference>
<dbReference type="GO" id="GO:0008033">
    <property type="term" value="P:tRNA processing"/>
    <property type="evidence" value="ECO:0007669"/>
    <property type="project" value="UniProtKB-KW"/>
</dbReference>
<dbReference type="InterPro" id="IPR005636">
    <property type="entry name" value="DTW"/>
</dbReference>
<dbReference type="InterPro" id="IPR039262">
    <property type="entry name" value="DTWD2/TAPT"/>
</dbReference>
<dbReference type="PANTHER" id="PTHR21392">
    <property type="entry name" value="TRNA-URIDINE AMINOCARBOXYPROPYLTRANSFERASE 2"/>
    <property type="match status" value="1"/>
</dbReference>
<dbReference type="PANTHER" id="PTHR21392:SF0">
    <property type="entry name" value="TRNA-URIDINE AMINOCARBOXYPROPYLTRANSFERASE 2"/>
    <property type="match status" value="1"/>
</dbReference>
<dbReference type="Pfam" id="PF03942">
    <property type="entry name" value="DTW"/>
    <property type="match status" value="1"/>
</dbReference>
<dbReference type="SMART" id="SM01144">
    <property type="entry name" value="DTW"/>
    <property type="match status" value="1"/>
</dbReference>
<feature type="chain" id="PRO_0000456764" description="tRNA-uridine aminocarboxypropyltransferase A">
    <location>
        <begin position="1"/>
        <end position="264"/>
    </location>
</feature>
<feature type="region of interest" description="Disordered" evidence="2">
    <location>
        <begin position="245"/>
        <end position="264"/>
    </location>
</feature>
<feature type="short sequence motif" description="DXTW" evidence="1">
    <location>
        <begin position="144"/>
        <end position="147"/>
    </location>
</feature>
<feature type="compositionally biased region" description="Polar residues" evidence="2">
    <location>
        <begin position="254"/>
        <end position="264"/>
    </location>
</feature>
<feature type="binding site" evidence="1">
    <location>
        <position position="25"/>
    </location>
    <ligand>
        <name>Zn(2+)</name>
        <dbReference type="ChEBI" id="CHEBI:29105"/>
    </ligand>
</feature>
<feature type="binding site" evidence="1">
    <location>
        <position position="28"/>
    </location>
    <ligand>
        <name>Zn(2+)</name>
        <dbReference type="ChEBI" id="CHEBI:29105"/>
    </ligand>
</feature>
<feature type="binding site" evidence="1">
    <location>
        <position position="35"/>
    </location>
    <ligand>
        <name>Zn(2+)</name>
        <dbReference type="ChEBI" id="CHEBI:29105"/>
    </ligand>
</feature>
<feature type="binding site" evidence="1">
    <location>
        <position position="37"/>
    </location>
    <ligand>
        <name>Zn(2+)</name>
        <dbReference type="ChEBI" id="CHEBI:29105"/>
    </ligand>
</feature>
<feature type="mutagenesis site" description="Loss of activity." evidence="3">
    <original>D</original>
    <variation>A</variation>
    <location>
        <position position="144"/>
    </location>
</feature>
<feature type="mutagenesis site" description="Loss of activity." evidence="3">
    <original>W</original>
    <variation>A</variation>
    <location>
        <position position="147"/>
    </location>
</feature>
<comment type="function">
    <text evidence="3">Catalyzes the formation of 3-(3-amino-3-carboxypropyl)uridine (acp3U) at position 20a in the D-loop of several cytoplasmic tRNAs (acp3U(20a)).</text>
</comment>
<comment type="catalytic activity">
    <reaction evidence="3">
        <text>a uridine in tRNA + S-adenosyl-L-methionine = a 3-[(3S)-3-amino-3-carboxypropyl]uridine in tRNA + S-methyl-5'-thioadenosine + H(+)</text>
        <dbReference type="Rhea" id="RHEA:62432"/>
        <dbReference type="Rhea" id="RHEA-COMP:13339"/>
        <dbReference type="Rhea" id="RHEA-COMP:16092"/>
        <dbReference type="ChEBI" id="CHEBI:15378"/>
        <dbReference type="ChEBI" id="CHEBI:17509"/>
        <dbReference type="ChEBI" id="CHEBI:59789"/>
        <dbReference type="ChEBI" id="CHEBI:65315"/>
        <dbReference type="ChEBI" id="CHEBI:82930"/>
        <dbReference type="EC" id="2.5.1.25"/>
    </reaction>
</comment>
<comment type="domain">
    <text evidence="1">Contains 1 DXTW motif.</text>
</comment>
<comment type="similarity">
    <text evidence="5">Belongs to the TDD superfamily. DTWD2 family.</text>
</comment>
<comment type="sequence caution" evidence="5">
    <conflict type="erroneous gene model prediction">
        <sequence resource="EMBL-CDS" id="AAC02772"/>
    </conflict>
</comment>
<comment type="sequence caution" evidence="5">
    <conflict type="erroneous initiation">
        <sequence resource="EMBL-CDS" id="AAL69440"/>
    </conflict>
    <text>Truncated N-terminus.</text>
</comment>
<comment type="sequence caution" evidence="5">
    <conflict type="erroneous initiation">
        <sequence resource="EMBL-CDS" id="BAC42687"/>
    </conflict>
    <text>Truncated N-terminus.</text>
</comment>
<sequence>MLECSRDRAVTMEDEQDAHHRRQICDNCDRPNAICLCHVLPADLIPTNTEIIILHHPHESRHKLNTTPLLTKSLLNVTRIPARRLLRRHISTAGGTALPAPPTIYLFPSSPSSPAVTISEFKSLNLLNHREISNPPPLRLIVFDATWKHAKEMVKASEVVLREAGAVRVCLDTEIDASVSGGTIYDSELVLRKEPFGGCVTTAEAVARCLGAIEPDGEEIERKLISVLKEMVRFQSKYLKPMKPRPKLLKKRFQNQQPLEQEEE</sequence>
<accession>F4IL05</accession>
<accession>O22945</accession>
<organism>
    <name type="scientific">Arabidopsis thaliana</name>
    <name type="common">Mouse-ear cress</name>
    <dbReference type="NCBI Taxonomy" id="3702"/>
    <lineage>
        <taxon>Eukaryota</taxon>
        <taxon>Viridiplantae</taxon>
        <taxon>Streptophyta</taxon>
        <taxon>Embryophyta</taxon>
        <taxon>Tracheophyta</taxon>
        <taxon>Spermatophyta</taxon>
        <taxon>Magnoliopsida</taxon>
        <taxon>eudicotyledons</taxon>
        <taxon>Gunneridae</taxon>
        <taxon>Pentapetalae</taxon>
        <taxon>rosids</taxon>
        <taxon>malvids</taxon>
        <taxon>Brassicales</taxon>
        <taxon>Brassicaceae</taxon>
        <taxon>Camelineae</taxon>
        <taxon>Arabidopsis</taxon>
    </lineage>
</organism>
<keyword id="KW-0479">Metal-binding</keyword>
<keyword id="KW-1185">Reference proteome</keyword>
<keyword id="KW-0949">S-adenosyl-L-methionine</keyword>
<keyword id="KW-0808">Transferase</keyword>
<keyword id="KW-0819">tRNA processing</keyword>
<keyword id="KW-0862">Zinc</keyword>
<name>DTW2A_ARATH</name>
<protein>
    <recommendedName>
        <fullName evidence="5">tRNA-uridine aminocarboxypropyltransferase A</fullName>
        <ecNumber evidence="3">2.5.1.25</ecNumber>
    </recommendedName>
    <alternativeName>
        <fullName evidence="4">DTW domain-containing protein 2 A</fullName>
    </alternativeName>
</protein>
<gene>
    <name evidence="4" type="primary">DTWD2A</name>
    <name evidence="6" type="ordered locus">At2g41750</name>
    <name evidence="7" type="ORF">T11A7.15</name>
</gene>
<proteinExistence type="evidence at protein level"/>
<reference key="1">
    <citation type="journal article" date="1999" name="Nature">
        <title>Sequence and analysis of chromosome 2 of the plant Arabidopsis thaliana.</title>
        <authorList>
            <person name="Lin X."/>
            <person name="Kaul S."/>
            <person name="Rounsley S.D."/>
            <person name="Shea T.P."/>
            <person name="Benito M.-I."/>
            <person name="Town C.D."/>
            <person name="Fujii C.Y."/>
            <person name="Mason T.M."/>
            <person name="Bowman C.L."/>
            <person name="Barnstead M.E."/>
            <person name="Feldblyum T.V."/>
            <person name="Buell C.R."/>
            <person name="Ketchum K.A."/>
            <person name="Lee J.J."/>
            <person name="Ronning C.M."/>
            <person name="Koo H.L."/>
            <person name="Moffat K.S."/>
            <person name="Cronin L.A."/>
            <person name="Shen M."/>
            <person name="Pai G."/>
            <person name="Van Aken S."/>
            <person name="Umayam L."/>
            <person name="Tallon L.J."/>
            <person name="Gill J.E."/>
            <person name="Adams M.D."/>
            <person name="Carrera A.J."/>
            <person name="Creasy T.H."/>
            <person name="Goodman H.M."/>
            <person name="Somerville C.R."/>
            <person name="Copenhaver G.P."/>
            <person name="Preuss D."/>
            <person name="Nierman W.C."/>
            <person name="White O."/>
            <person name="Eisen J.A."/>
            <person name="Salzberg S.L."/>
            <person name="Fraser C.M."/>
            <person name="Venter J.C."/>
        </authorList>
    </citation>
    <scope>NUCLEOTIDE SEQUENCE [LARGE SCALE GENOMIC DNA]</scope>
    <source>
        <strain>cv. Columbia</strain>
    </source>
</reference>
<reference key="2">
    <citation type="journal article" date="2017" name="Plant J.">
        <title>Araport11: a complete reannotation of the Arabidopsis thaliana reference genome.</title>
        <authorList>
            <person name="Cheng C.Y."/>
            <person name="Krishnakumar V."/>
            <person name="Chan A.P."/>
            <person name="Thibaud-Nissen F."/>
            <person name="Schobel S."/>
            <person name="Town C.D."/>
        </authorList>
    </citation>
    <scope>GENOME REANNOTATION</scope>
    <source>
        <strain>cv. Columbia</strain>
    </source>
</reference>
<reference key="3">
    <citation type="journal article" date="2003" name="Science">
        <title>Empirical analysis of transcriptional activity in the Arabidopsis genome.</title>
        <authorList>
            <person name="Yamada K."/>
            <person name="Lim J."/>
            <person name="Dale J.M."/>
            <person name="Chen H."/>
            <person name="Shinn P."/>
            <person name="Palm C.J."/>
            <person name="Southwick A.M."/>
            <person name="Wu H.C."/>
            <person name="Kim C.J."/>
            <person name="Nguyen M."/>
            <person name="Pham P.K."/>
            <person name="Cheuk R.F."/>
            <person name="Karlin-Newmann G."/>
            <person name="Liu S.X."/>
            <person name="Lam B."/>
            <person name="Sakano H."/>
            <person name="Wu T."/>
            <person name="Yu G."/>
            <person name="Miranda M."/>
            <person name="Quach H.L."/>
            <person name="Tripp M."/>
            <person name="Chang C.H."/>
            <person name="Lee J.M."/>
            <person name="Toriumi M.J."/>
            <person name="Chan M.M."/>
            <person name="Tang C.C."/>
            <person name="Onodera C.S."/>
            <person name="Deng J.M."/>
            <person name="Akiyama K."/>
            <person name="Ansari Y."/>
            <person name="Arakawa T."/>
            <person name="Banh J."/>
            <person name="Banno F."/>
            <person name="Bowser L."/>
            <person name="Brooks S.Y."/>
            <person name="Carninci P."/>
            <person name="Chao Q."/>
            <person name="Choy N."/>
            <person name="Enju A."/>
            <person name="Goldsmith A.D."/>
            <person name="Gurjal M."/>
            <person name="Hansen N.F."/>
            <person name="Hayashizaki Y."/>
            <person name="Johnson-Hopson C."/>
            <person name="Hsuan V.W."/>
            <person name="Iida K."/>
            <person name="Karnes M."/>
            <person name="Khan S."/>
            <person name="Koesema E."/>
            <person name="Ishida J."/>
            <person name="Jiang P.X."/>
            <person name="Jones T."/>
            <person name="Kawai J."/>
            <person name="Kamiya A."/>
            <person name="Meyers C."/>
            <person name="Nakajima M."/>
            <person name="Narusaka M."/>
            <person name="Seki M."/>
            <person name="Sakurai T."/>
            <person name="Satou M."/>
            <person name="Tamse R."/>
            <person name="Vaysberg M."/>
            <person name="Wallender E.K."/>
            <person name="Wong C."/>
            <person name="Yamamura Y."/>
            <person name="Yuan S."/>
            <person name="Shinozaki K."/>
            <person name="Davis R.W."/>
            <person name="Theologis A."/>
            <person name="Ecker J.R."/>
        </authorList>
    </citation>
    <scope>NUCLEOTIDE SEQUENCE [LARGE SCALE MRNA] OF 7-264</scope>
    <source>
        <strain>cv. Columbia</strain>
    </source>
</reference>
<reference key="4">
    <citation type="journal article" date="2002" name="Science">
        <title>Functional annotation of a full-length Arabidopsis cDNA collection.</title>
        <authorList>
            <person name="Seki M."/>
            <person name="Narusaka M."/>
            <person name="Kamiya A."/>
            <person name="Ishida J."/>
            <person name="Satou M."/>
            <person name="Sakurai T."/>
            <person name="Nakajima M."/>
            <person name="Enju A."/>
            <person name="Akiyama K."/>
            <person name="Oono Y."/>
            <person name="Muramatsu M."/>
            <person name="Hayashizaki Y."/>
            <person name="Kawai J."/>
            <person name="Carninci P."/>
            <person name="Itoh M."/>
            <person name="Ishii Y."/>
            <person name="Arakawa T."/>
            <person name="Shibata K."/>
            <person name="Shinagawa A."/>
            <person name="Shinozaki K."/>
        </authorList>
    </citation>
    <scope>NUCLEOTIDE SEQUENCE [LARGE SCALE MRNA] OF 11-264</scope>
    <source>
        <strain>cv. Columbia</strain>
    </source>
</reference>
<reference key="5">
    <citation type="submission" date="2004-12" db="EMBL/GenBank/DDBJ databases">
        <title>Arabidopsis ORF clones.</title>
        <authorList>
            <person name="Shinn P."/>
            <person name="Chen H."/>
            <person name="Cheuk R.F."/>
            <person name="Kim C.J."/>
            <person name="Ecker J.R."/>
        </authorList>
    </citation>
    <scope>NUCLEOTIDE SEQUENCE [LARGE SCALE MRNA] OF 12-264</scope>
    <source>
        <strain>cv. Columbia</strain>
    </source>
</reference>
<reference evidence="5" key="6">
    <citation type="journal article" date="2020" name="PLoS ONE">
        <title>Identification of the enzymes responsible for m2,2G and acp3U formation on cytosolic tRNA from insects and plants.</title>
        <authorList>
            <person name="Funk H.M."/>
            <person name="Zhao R."/>
            <person name="Thomas M."/>
            <person name="Spigelmyer S.M."/>
            <person name="Sebree N.J."/>
            <person name="Bales R.O."/>
            <person name="Burchett J.B."/>
            <person name="Mamaril J.B."/>
            <person name="Limbach P.A."/>
            <person name="Guy M.P."/>
        </authorList>
    </citation>
    <scope>FUNCTION</scope>
    <scope>CATALYTIC ACTIVITY</scope>
    <scope>MUTAGENESIS OF ASP-144 AND TRP-147</scope>
</reference>